<accession>Q0K963</accession>
<protein>
    <recommendedName>
        <fullName evidence="1">Histidine--tRNA ligase</fullName>
        <ecNumber evidence="1">6.1.1.21</ecNumber>
    </recommendedName>
    <alternativeName>
        <fullName evidence="1">Histidyl-tRNA synthetase</fullName>
        <shortName evidence="1">HisRS</shortName>
    </alternativeName>
</protein>
<gene>
    <name evidence="1" type="primary">hisS</name>
    <name type="ordered locus">H16_A2363</name>
</gene>
<keyword id="KW-0030">Aminoacyl-tRNA synthetase</keyword>
<keyword id="KW-0067">ATP-binding</keyword>
<keyword id="KW-0963">Cytoplasm</keyword>
<keyword id="KW-0436">Ligase</keyword>
<keyword id="KW-0547">Nucleotide-binding</keyword>
<keyword id="KW-0648">Protein biosynthesis</keyword>
<keyword id="KW-1185">Reference proteome</keyword>
<organism>
    <name type="scientific">Cupriavidus necator (strain ATCC 17699 / DSM 428 / KCTC 22496 / NCIMB 10442 / H16 / Stanier 337)</name>
    <name type="common">Ralstonia eutropha</name>
    <dbReference type="NCBI Taxonomy" id="381666"/>
    <lineage>
        <taxon>Bacteria</taxon>
        <taxon>Pseudomonadati</taxon>
        <taxon>Pseudomonadota</taxon>
        <taxon>Betaproteobacteria</taxon>
        <taxon>Burkholderiales</taxon>
        <taxon>Burkholderiaceae</taxon>
        <taxon>Cupriavidus</taxon>
    </lineage>
</organism>
<proteinExistence type="inferred from homology"/>
<evidence type="ECO:0000255" key="1">
    <source>
        <dbReference type="HAMAP-Rule" id="MF_00127"/>
    </source>
</evidence>
<evidence type="ECO:0000256" key="2">
    <source>
        <dbReference type="SAM" id="MobiDB-lite"/>
    </source>
</evidence>
<comment type="catalytic activity">
    <reaction evidence="1">
        <text>tRNA(His) + L-histidine + ATP = L-histidyl-tRNA(His) + AMP + diphosphate + H(+)</text>
        <dbReference type="Rhea" id="RHEA:17313"/>
        <dbReference type="Rhea" id="RHEA-COMP:9665"/>
        <dbReference type="Rhea" id="RHEA-COMP:9689"/>
        <dbReference type="ChEBI" id="CHEBI:15378"/>
        <dbReference type="ChEBI" id="CHEBI:30616"/>
        <dbReference type="ChEBI" id="CHEBI:33019"/>
        <dbReference type="ChEBI" id="CHEBI:57595"/>
        <dbReference type="ChEBI" id="CHEBI:78442"/>
        <dbReference type="ChEBI" id="CHEBI:78527"/>
        <dbReference type="ChEBI" id="CHEBI:456215"/>
        <dbReference type="EC" id="6.1.1.21"/>
    </reaction>
</comment>
<comment type="subunit">
    <text evidence="1">Homodimer.</text>
</comment>
<comment type="subcellular location">
    <subcellularLocation>
        <location evidence="1">Cytoplasm</location>
    </subcellularLocation>
</comment>
<comment type="similarity">
    <text evidence="1">Belongs to the class-II aminoacyl-tRNA synthetase family.</text>
</comment>
<reference key="1">
    <citation type="journal article" date="2006" name="Nat. Biotechnol.">
        <title>Genome sequence of the bioplastic-producing 'Knallgas' bacterium Ralstonia eutropha H16.</title>
        <authorList>
            <person name="Pohlmann A."/>
            <person name="Fricke W.F."/>
            <person name="Reinecke F."/>
            <person name="Kusian B."/>
            <person name="Liesegang H."/>
            <person name="Cramm R."/>
            <person name="Eitinger T."/>
            <person name="Ewering C."/>
            <person name="Poetter M."/>
            <person name="Schwartz E."/>
            <person name="Strittmatter A."/>
            <person name="Voss I."/>
            <person name="Gottschalk G."/>
            <person name="Steinbuechel A."/>
            <person name="Friedrich B."/>
            <person name="Bowien B."/>
        </authorList>
    </citation>
    <scope>NUCLEOTIDE SEQUENCE [LARGE SCALE GENOMIC DNA]</scope>
    <source>
        <strain>ATCC 17699 / DSM 428 / KCTC 22496 / NCIMB 10442 / H16 / Stanier 337</strain>
    </source>
</reference>
<name>SYH_CUPNH</name>
<feature type="chain" id="PRO_1000016429" description="Histidine--tRNA ligase">
    <location>
        <begin position="1"/>
        <end position="456"/>
    </location>
</feature>
<feature type="region of interest" description="Disordered" evidence="2">
    <location>
        <begin position="1"/>
        <end position="20"/>
    </location>
</feature>
<sequence length="456" mass="49982">MTQSENVAAAGGAKTEPKVRPAKALQGVKGMNDMLPADAPLWEHFENAARAMLRAYGYQQIRTPIVEHTQLFVRGIGEVTDIVEKEMYSFTDSLNGEQLTLRPEGTAAAVRATIEHNLLYDGPKRLWYTGPMFRHERPQRGRYRQFHQLGAEALGFAGPDVDAEIILMCQRLWDDLGLVGVRLELNSLGQAHERAAHREQLIKYLEGFQDILDDDSKRRLYTNPLRVLDTKNPALQEMAANAPKLIDFLGEESLAHFEGVQRLLKANNIPFKINPRLVRGLDYYNLTVFEWITDKLGAQGTIAGGGRYDPLIAQMGGKPAPACGWAMGIERIIELIREEGVVPDAAGCDVYLVHQGEAAAQQAMIAAERLRDAGLDVVLHASPDGKGGSFKSQMKRADTSGAAYAVIIGDDEVAAGVVQVKELRQREQAEGGGQQATVPAEGLVDYLIDAMVGASE</sequence>
<dbReference type="EC" id="6.1.1.21" evidence="1"/>
<dbReference type="EMBL" id="AM260479">
    <property type="protein sequence ID" value="CAJ93458.1"/>
    <property type="molecule type" value="Genomic_DNA"/>
</dbReference>
<dbReference type="RefSeq" id="WP_010809427.1">
    <property type="nucleotide sequence ID" value="NZ_CP039287.1"/>
</dbReference>
<dbReference type="SMR" id="Q0K963"/>
<dbReference type="STRING" id="381666.H16_A2363"/>
<dbReference type="KEGG" id="reh:H16_A2363"/>
<dbReference type="eggNOG" id="COG0124">
    <property type="taxonomic scope" value="Bacteria"/>
</dbReference>
<dbReference type="HOGENOM" id="CLU_025113_1_1_4"/>
<dbReference type="OrthoDB" id="9800814at2"/>
<dbReference type="Proteomes" id="UP000008210">
    <property type="component" value="Chromosome 1"/>
</dbReference>
<dbReference type="GO" id="GO:0005737">
    <property type="term" value="C:cytoplasm"/>
    <property type="evidence" value="ECO:0007669"/>
    <property type="project" value="UniProtKB-SubCell"/>
</dbReference>
<dbReference type="GO" id="GO:0005524">
    <property type="term" value="F:ATP binding"/>
    <property type="evidence" value="ECO:0007669"/>
    <property type="project" value="UniProtKB-UniRule"/>
</dbReference>
<dbReference type="GO" id="GO:0004821">
    <property type="term" value="F:histidine-tRNA ligase activity"/>
    <property type="evidence" value="ECO:0007669"/>
    <property type="project" value="UniProtKB-UniRule"/>
</dbReference>
<dbReference type="GO" id="GO:0006427">
    <property type="term" value="P:histidyl-tRNA aminoacylation"/>
    <property type="evidence" value="ECO:0007669"/>
    <property type="project" value="UniProtKB-UniRule"/>
</dbReference>
<dbReference type="CDD" id="cd00773">
    <property type="entry name" value="HisRS-like_core"/>
    <property type="match status" value="1"/>
</dbReference>
<dbReference type="CDD" id="cd00859">
    <property type="entry name" value="HisRS_anticodon"/>
    <property type="match status" value="1"/>
</dbReference>
<dbReference type="FunFam" id="3.30.930.10:FF:000005">
    <property type="entry name" value="Histidine--tRNA ligase"/>
    <property type="match status" value="1"/>
</dbReference>
<dbReference type="Gene3D" id="3.40.50.800">
    <property type="entry name" value="Anticodon-binding domain"/>
    <property type="match status" value="1"/>
</dbReference>
<dbReference type="Gene3D" id="3.30.930.10">
    <property type="entry name" value="Bira Bifunctional Protein, Domain 2"/>
    <property type="match status" value="1"/>
</dbReference>
<dbReference type="HAMAP" id="MF_00127">
    <property type="entry name" value="His_tRNA_synth"/>
    <property type="match status" value="1"/>
</dbReference>
<dbReference type="InterPro" id="IPR006195">
    <property type="entry name" value="aa-tRNA-synth_II"/>
</dbReference>
<dbReference type="InterPro" id="IPR045864">
    <property type="entry name" value="aa-tRNA-synth_II/BPL/LPL"/>
</dbReference>
<dbReference type="InterPro" id="IPR004154">
    <property type="entry name" value="Anticodon-bd"/>
</dbReference>
<dbReference type="InterPro" id="IPR036621">
    <property type="entry name" value="Anticodon-bd_dom_sf"/>
</dbReference>
<dbReference type="InterPro" id="IPR015807">
    <property type="entry name" value="His-tRNA-ligase"/>
</dbReference>
<dbReference type="InterPro" id="IPR041715">
    <property type="entry name" value="HisRS-like_core"/>
</dbReference>
<dbReference type="InterPro" id="IPR004516">
    <property type="entry name" value="HisRS/HisZ"/>
</dbReference>
<dbReference type="InterPro" id="IPR033656">
    <property type="entry name" value="HisRS_anticodon"/>
</dbReference>
<dbReference type="NCBIfam" id="TIGR00442">
    <property type="entry name" value="hisS"/>
    <property type="match status" value="1"/>
</dbReference>
<dbReference type="PANTHER" id="PTHR43707:SF1">
    <property type="entry name" value="HISTIDINE--TRNA LIGASE, MITOCHONDRIAL-RELATED"/>
    <property type="match status" value="1"/>
</dbReference>
<dbReference type="PANTHER" id="PTHR43707">
    <property type="entry name" value="HISTIDYL-TRNA SYNTHETASE"/>
    <property type="match status" value="1"/>
</dbReference>
<dbReference type="Pfam" id="PF03129">
    <property type="entry name" value="HGTP_anticodon"/>
    <property type="match status" value="1"/>
</dbReference>
<dbReference type="Pfam" id="PF13393">
    <property type="entry name" value="tRNA-synt_His"/>
    <property type="match status" value="1"/>
</dbReference>
<dbReference type="PIRSF" id="PIRSF001549">
    <property type="entry name" value="His-tRNA_synth"/>
    <property type="match status" value="1"/>
</dbReference>
<dbReference type="SUPFAM" id="SSF52954">
    <property type="entry name" value="Class II aaRS ABD-related"/>
    <property type="match status" value="1"/>
</dbReference>
<dbReference type="SUPFAM" id="SSF55681">
    <property type="entry name" value="Class II aaRS and biotin synthetases"/>
    <property type="match status" value="1"/>
</dbReference>
<dbReference type="PROSITE" id="PS50862">
    <property type="entry name" value="AA_TRNA_LIGASE_II"/>
    <property type="match status" value="1"/>
</dbReference>